<keyword id="KW-0997">Cell inner membrane</keyword>
<keyword id="KW-1003">Cell membrane</keyword>
<keyword id="KW-0472">Membrane</keyword>
<keyword id="KW-0520">NAD</keyword>
<keyword id="KW-0874">Quinone</keyword>
<keyword id="KW-1185">Reference proteome</keyword>
<keyword id="KW-1278">Translocase</keyword>
<keyword id="KW-0812">Transmembrane</keyword>
<keyword id="KW-1133">Transmembrane helix</keyword>
<keyword id="KW-0813">Transport</keyword>
<organism>
    <name type="scientific">Chloroherpeton thalassium (strain ATCC 35110 / GB-78)</name>
    <dbReference type="NCBI Taxonomy" id="517418"/>
    <lineage>
        <taxon>Bacteria</taxon>
        <taxon>Pseudomonadati</taxon>
        <taxon>Chlorobiota</taxon>
        <taxon>Chlorobiia</taxon>
        <taxon>Chlorobiales</taxon>
        <taxon>Chloroherpetonaceae</taxon>
        <taxon>Chloroherpeton</taxon>
    </lineage>
</organism>
<dbReference type="EC" id="7.1.1.-" evidence="1"/>
<dbReference type="EMBL" id="CP001100">
    <property type="protein sequence ID" value="ACF14476.1"/>
    <property type="molecule type" value="Genomic_DNA"/>
</dbReference>
<dbReference type="RefSeq" id="WP_012500559.1">
    <property type="nucleotide sequence ID" value="NC_011026.1"/>
</dbReference>
<dbReference type="SMR" id="B3QUX5"/>
<dbReference type="STRING" id="517418.Ctha_2024"/>
<dbReference type="KEGG" id="cts:Ctha_2024"/>
<dbReference type="eggNOG" id="COG0838">
    <property type="taxonomic scope" value="Bacteria"/>
</dbReference>
<dbReference type="HOGENOM" id="CLU_119549_3_1_10"/>
<dbReference type="OrthoDB" id="9791970at2"/>
<dbReference type="Proteomes" id="UP000001208">
    <property type="component" value="Chromosome"/>
</dbReference>
<dbReference type="GO" id="GO:0030964">
    <property type="term" value="C:NADH dehydrogenase complex"/>
    <property type="evidence" value="ECO:0007669"/>
    <property type="project" value="TreeGrafter"/>
</dbReference>
<dbReference type="GO" id="GO:0005886">
    <property type="term" value="C:plasma membrane"/>
    <property type="evidence" value="ECO:0007669"/>
    <property type="project" value="UniProtKB-SubCell"/>
</dbReference>
<dbReference type="GO" id="GO:0008137">
    <property type="term" value="F:NADH dehydrogenase (ubiquinone) activity"/>
    <property type="evidence" value="ECO:0007669"/>
    <property type="project" value="InterPro"/>
</dbReference>
<dbReference type="GO" id="GO:0050136">
    <property type="term" value="F:NADH:ubiquinone reductase (non-electrogenic) activity"/>
    <property type="evidence" value="ECO:0007669"/>
    <property type="project" value="UniProtKB-UniRule"/>
</dbReference>
<dbReference type="GO" id="GO:0048038">
    <property type="term" value="F:quinone binding"/>
    <property type="evidence" value="ECO:0007669"/>
    <property type="project" value="UniProtKB-KW"/>
</dbReference>
<dbReference type="Gene3D" id="1.20.58.1610">
    <property type="entry name" value="NADH:ubiquinone/plastoquinone oxidoreductase, chain 3"/>
    <property type="match status" value="1"/>
</dbReference>
<dbReference type="HAMAP" id="MF_01394">
    <property type="entry name" value="NDH1_NuoA"/>
    <property type="match status" value="1"/>
</dbReference>
<dbReference type="InterPro" id="IPR023043">
    <property type="entry name" value="NAD(P)H_OxRDtase_bac/plastid"/>
</dbReference>
<dbReference type="InterPro" id="IPR000440">
    <property type="entry name" value="NADH_UbQ/plastoQ_OxRdtase_su3"/>
</dbReference>
<dbReference type="InterPro" id="IPR038430">
    <property type="entry name" value="NDAH_ubi_oxred_su3_sf"/>
</dbReference>
<dbReference type="PANTHER" id="PTHR11058">
    <property type="entry name" value="NADH-UBIQUINONE OXIDOREDUCTASE CHAIN 3"/>
    <property type="match status" value="1"/>
</dbReference>
<dbReference type="PANTHER" id="PTHR11058:SF9">
    <property type="entry name" value="NADH-UBIQUINONE OXIDOREDUCTASE CHAIN 3"/>
    <property type="match status" value="1"/>
</dbReference>
<dbReference type="Pfam" id="PF00507">
    <property type="entry name" value="Oxidored_q4"/>
    <property type="match status" value="1"/>
</dbReference>
<name>NUOA1_CHLT3</name>
<proteinExistence type="inferred from homology"/>
<evidence type="ECO:0000255" key="1">
    <source>
        <dbReference type="HAMAP-Rule" id="MF_01394"/>
    </source>
</evidence>
<comment type="function">
    <text evidence="1">NDH-1 shuttles electrons from NADH, via FMN and iron-sulfur (Fe-S) centers, to quinones in the respiratory chain. The immediate electron acceptor for the enzyme in this species is believed to be a menaquinone. Couples the redox reaction to proton translocation (for every two electrons transferred, four hydrogen ions are translocated across the cytoplasmic membrane), and thus conserves the redox energy in a proton gradient.</text>
</comment>
<comment type="catalytic activity">
    <reaction evidence="1">
        <text>a quinone + NADH + 5 H(+)(in) = a quinol + NAD(+) + 4 H(+)(out)</text>
        <dbReference type="Rhea" id="RHEA:57888"/>
        <dbReference type="ChEBI" id="CHEBI:15378"/>
        <dbReference type="ChEBI" id="CHEBI:24646"/>
        <dbReference type="ChEBI" id="CHEBI:57540"/>
        <dbReference type="ChEBI" id="CHEBI:57945"/>
        <dbReference type="ChEBI" id="CHEBI:132124"/>
    </reaction>
</comment>
<comment type="subunit">
    <text evidence="1">NDH-1 is composed of 14 different subunits. Subunits NuoA, H, J, K, L, M, N constitute the membrane sector of the complex.</text>
</comment>
<comment type="subcellular location">
    <subcellularLocation>
        <location evidence="1">Cell inner membrane</location>
        <topology evidence="1">Multi-pass membrane protein</topology>
    </subcellularLocation>
</comment>
<comment type="similarity">
    <text evidence="1">Belongs to the complex I subunit 3 family.</text>
</comment>
<feature type="chain" id="PRO_0000362661" description="NADH-quinone oxidoreductase subunit A 1">
    <location>
        <begin position="1"/>
        <end position="121"/>
    </location>
</feature>
<feature type="transmembrane region" description="Helical" evidence="1">
    <location>
        <begin position="6"/>
        <end position="26"/>
    </location>
</feature>
<feature type="transmembrane region" description="Helical" evidence="1">
    <location>
        <begin position="62"/>
        <end position="82"/>
    </location>
</feature>
<feature type="transmembrane region" description="Helical" evidence="1">
    <location>
        <begin position="90"/>
        <end position="110"/>
    </location>
</feature>
<protein>
    <recommendedName>
        <fullName evidence="1">NADH-quinone oxidoreductase subunit A 1</fullName>
        <ecNumber evidence="1">7.1.1.-</ecNumber>
    </recommendedName>
    <alternativeName>
        <fullName evidence="1">NADH dehydrogenase I subunit A 1</fullName>
    </alternativeName>
    <alternativeName>
        <fullName evidence="1">NDH-1 subunit A 1</fullName>
    </alternativeName>
    <alternativeName>
        <fullName evidence="1">NUO1 1</fullName>
    </alternativeName>
</protein>
<reference key="1">
    <citation type="submission" date="2008-06" db="EMBL/GenBank/DDBJ databases">
        <title>Complete sequence of Chloroherpeton thalassium ATCC 35110.</title>
        <authorList>
            <consortium name="US DOE Joint Genome Institute"/>
            <person name="Lucas S."/>
            <person name="Copeland A."/>
            <person name="Lapidus A."/>
            <person name="Glavina del Rio T."/>
            <person name="Dalin E."/>
            <person name="Tice H."/>
            <person name="Bruce D."/>
            <person name="Goodwin L."/>
            <person name="Pitluck S."/>
            <person name="Schmutz J."/>
            <person name="Larimer F."/>
            <person name="Land M."/>
            <person name="Hauser L."/>
            <person name="Kyrpides N."/>
            <person name="Mikhailova N."/>
            <person name="Liu Z."/>
            <person name="Li T."/>
            <person name="Zhao F."/>
            <person name="Overmann J."/>
            <person name="Bryant D.A."/>
            <person name="Richardson P."/>
        </authorList>
    </citation>
    <scope>NUCLEOTIDE SEQUENCE [LARGE SCALE GENOMIC DNA]</scope>
    <source>
        <strain>ATCC 35110 / GB-78</strain>
    </source>
</reference>
<gene>
    <name evidence="1" type="primary">nuoA1</name>
    <name type="ordered locus">Ctha_2024</name>
</gene>
<accession>B3QUX5</accession>
<sequence>MLESYFPIFVVISIAIILAVVLLSIGKIIGPKRNNPEKLTPYESGMDPVGSTRTRVTVRFYLVAMIFIVFDIEVIFMYPWAVSFRELSGFYGLIPMVTFVLILLAGYYYILKKKALDWDEE</sequence>